<keyword id="KW-0012">Acyltransferase</keyword>
<keyword id="KW-0963">Cytoplasm</keyword>
<keyword id="KW-0441">Lipid A biosynthesis</keyword>
<keyword id="KW-0444">Lipid biosynthesis</keyword>
<keyword id="KW-0443">Lipid metabolism</keyword>
<keyword id="KW-0677">Repeat</keyword>
<keyword id="KW-0808">Transferase</keyword>
<organism>
    <name type="scientific">Salmonella choleraesuis (strain SC-B67)</name>
    <dbReference type="NCBI Taxonomy" id="321314"/>
    <lineage>
        <taxon>Bacteria</taxon>
        <taxon>Pseudomonadati</taxon>
        <taxon>Pseudomonadota</taxon>
        <taxon>Gammaproteobacteria</taxon>
        <taxon>Enterobacterales</taxon>
        <taxon>Enterobacteriaceae</taxon>
        <taxon>Salmonella</taxon>
    </lineage>
</organism>
<sequence length="262" mass="28089">MIDKSAFIHPTAIVEDGAVIGANAHIGPFCIVGPQVEIGEGTVLKSHVVVNGQTKIGRDNEIYQFASIGEVNQDLKYAGEPTRVEIGDRNRIRESVTIHRGTVQGGGLTKVGSDNLLMINAHVAHDCTVGNRCILANNATLAGHVSVDDFAIIGGMTAVHQFCIIGAHVMVGGCSGVAQDVPPYVIAQGNHATPFGVNIEGLKRRGFSREGLVAIRNAYKLLYRSGKTLDEAKLEIAELAEKHPEVKAFTEFFERSTRGPIR</sequence>
<name>LPXA_SALCH</name>
<comment type="function">
    <text evidence="1">Involved in the biosynthesis of lipid A, a phosphorylated glycolipid that anchors the lipopolysaccharide to the outer membrane of the cell.</text>
</comment>
<comment type="catalytic activity">
    <reaction evidence="1">
        <text>a (3R)-hydroxyacyl-[ACP] + UDP-N-acetyl-alpha-D-glucosamine = a UDP-3-O-[(3R)-3-hydroxyacyl]-N-acetyl-alpha-D-glucosamine + holo-[ACP]</text>
        <dbReference type="Rhea" id="RHEA:67812"/>
        <dbReference type="Rhea" id="RHEA-COMP:9685"/>
        <dbReference type="Rhea" id="RHEA-COMP:9945"/>
        <dbReference type="ChEBI" id="CHEBI:57705"/>
        <dbReference type="ChEBI" id="CHEBI:64479"/>
        <dbReference type="ChEBI" id="CHEBI:78827"/>
        <dbReference type="ChEBI" id="CHEBI:173225"/>
        <dbReference type="EC" id="2.3.1.129"/>
    </reaction>
</comment>
<comment type="pathway">
    <text evidence="1">Glycolipid biosynthesis; lipid IV(A) biosynthesis; lipid IV(A) from (3R)-3-hydroxytetradecanoyl-[acyl-carrier-protein] and UDP-N-acetyl-alpha-D-glucosamine: step 1/6.</text>
</comment>
<comment type="subunit">
    <text evidence="1">Homotrimer.</text>
</comment>
<comment type="subcellular location">
    <subcellularLocation>
        <location evidence="1">Cytoplasm</location>
    </subcellularLocation>
</comment>
<comment type="similarity">
    <text evidence="1">Belongs to the transferase hexapeptide repeat family. LpxA subfamily.</text>
</comment>
<gene>
    <name evidence="1" type="primary">lpxA</name>
    <name type="ordered locus">SCH_0228</name>
</gene>
<evidence type="ECO:0000255" key="1">
    <source>
        <dbReference type="HAMAP-Rule" id="MF_00387"/>
    </source>
</evidence>
<protein>
    <recommendedName>
        <fullName evidence="1">Acyl-[acyl-carrier-protein]--UDP-N-acetylglucosamine O-acyltransferase</fullName>
        <shortName evidence="1">UDP-N-acetylglucosamine acyltransferase</shortName>
        <ecNumber evidence="1">2.3.1.129</ecNumber>
    </recommendedName>
</protein>
<reference key="1">
    <citation type="journal article" date="2005" name="Nucleic Acids Res.">
        <title>The genome sequence of Salmonella enterica serovar Choleraesuis, a highly invasive and resistant zoonotic pathogen.</title>
        <authorList>
            <person name="Chiu C.-H."/>
            <person name="Tang P."/>
            <person name="Chu C."/>
            <person name="Hu S."/>
            <person name="Bao Q."/>
            <person name="Yu J."/>
            <person name="Chou Y.-Y."/>
            <person name="Wang H.-S."/>
            <person name="Lee Y.-S."/>
        </authorList>
    </citation>
    <scope>NUCLEOTIDE SEQUENCE [LARGE SCALE GENOMIC DNA]</scope>
    <source>
        <strain>SC-B67</strain>
    </source>
</reference>
<dbReference type="EC" id="2.3.1.129" evidence="1"/>
<dbReference type="EMBL" id="AE017220">
    <property type="protein sequence ID" value="AAX64134.1"/>
    <property type="molecule type" value="Genomic_DNA"/>
</dbReference>
<dbReference type="RefSeq" id="WP_000565950.1">
    <property type="nucleotide sequence ID" value="NC_006905.1"/>
</dbReference>
<dbReference type="SMR" id="Q57T27"/>
<dbReference type="KEGG" id="sec:SCH_0228"/>
<dbReference type="HOGENOM" id="CLU_061249_0_0_6"/>
<dbReference type="UniPathway" id="UPA00359">
    <property type="reaction ID" value="UER00477"/>
</dbReference>
<dbReference type="Proteomes" id="UP000000538">
    <property type="component" value="Chromosome"/>
</dbReference>
<dbReference type="GO" id="GO:0005737">
    <property type="term" value="C:cytoplasm"/>
    <property type="evidence" value="ECO:0007669"/>
    <property type="project" value="UniProtKB-SubCell"/>
</dbReference>
<dbReference type="GO" id="GO:0016020">
    <property type="term" value="C:membrane"/>
    <property type="evidence" value="ECO:0007669"/>
    <property type="project" value="GOC"/>
</dbReference>
<dbReference type="GO" id="GO:0008780">
    <property type="term" value="F:acyl-[acyl-carrier-protein]-UDP-N-acetylglucosamine O-acyltransferase activity"/>
    <property type="evidence" value="ECO:0007669"/>
    <property type="project" value="UniProtKB-UniRule"/>
</dbReference>
<dbReference type="GO" id="GO:0009245">
    <property type="term" value="P:lipid A biosynthetic process"/>
    <property type="evidence" value="ECO:0007669"/>
    <property type="project" value="UniProtKB-UniRule"/>
</dbReference>
<dbReference type="CDD" id="cd03351">
    <property type="entry name" value="LbH_UDP-GlcNAc_AT"/>
    <property type="match status" value="1"/>
</dbReference>
<dbReference type="FunFam" id="2.160.10.10:FF:000003">
    <property type="entry name" value="Acyl-[acyl-carrier-protein]--UDP-N-acetylglucosamine O-acyltransferase"/>
    <property type="match status" value="1"/>
</dbReference>
<dbReference type="Gene3D" id="2.160.10.10">
    <property type="entry name" value="Hexapeptide repeat proteins"/>
    <property type="match status" value="1"/>
</dbReference>
<dbReference type="Gene3D" id="1.20.1180.10">
    <property type="entry name" value="Udp N-acetylglucosamine O-acyltransferase, C-terminal domain"/>
    <property type="match status" value="1"/>
</dbReference>
<dbReference type="HAMAP" id="MF_00387">
    <property type="entry name" value="LpxA"/>
    <property type="match status" value="1"/>
</dbReference>
<dbReference type="InterPro" id="IPR029098">
    <property type="entry name" value="Acetyltransf_C"/>
</dbReference>
<dbReference type="InterPro" id="IPR037157">
    <property type="entry name" value="Acetyltransf_C_sf"/>
</dbReference>
<dbReference type="InterPro" id="IPR001451">
    <property type="entry name" value="Hexapep"/>
</dbReference>
<dbReference type="InterPro" id="IPR018357">
    <property type="entry name" value="Hexapep_transf_CS"/>
</dbReference>
<dbReference type="InterPro" id="IPR010137">
    <property type="entry name" value="Lipid_A_LpxA"/>
</dbReference>
<dbReference type="InterPro" id="IPR011004">
    <property type="entry name" value="Trimer_LpxA-like_sf"/>
</dbReference>
<dbReference type="NCBIfam" id="TIGR01852">
    <property type="entry name" value="lipid_A_lpxA"/>
    <property type="match status" value="1"/>
</dbReference>
<dbReference type="NCBIfam" id="NF003657">
    <property type="entry name" value="PRK05289.1"/>
    <property type="match status" value="1"/>
</dbReference>
<dbReference type="PANTHER" id="PTHR43480">
    <property type="entry name" value="ACYL-[ACYL-CARRIER-PROTEIN]--UDP-N-ACETYLGLUCOSAMINE O-ACYLTRANSFERASE"/>
    <property type="match status" value="1"/>
</dbReference>
<dbReference type="PANTHER" id="PTHR43480:SF1">
    <property type="entry name" value="ACYL-[ACYL-CARRIER-PROTEIN]--UDP-N-ACETYLGLUCOSAMINE O-ACYLTRANSFERASE, MITOCHONDRIAL-RELATED"/>
    <property type="match status" value="1"/>
</dbReference>
<dbReference type="Pfam" id="PF13720">
    <property type="entry name" value="Acetyltransf_11"/>
    <property type="match status" value="1"/>
</dbReference>
<dbReference type="Pfam" id="PF00132">
    <property type="entry name" value="Hexapep"/>
    <property type="match status" value="2"/>
</dbReference>
<dbReference type="PIRSF" id="PIRSF000456">
    <property type="entry name" value="UDP-GlcNAc_acltr"/>
    <property type="match status" value="1"/>
</dbReference>
<dbReference type="SUPFAM" id="SSF51161">
    <property type="entry name" value="Trimeric LpxA-like enzymes"/>
    <property type="match status" value="1"/>
</dbReference>
<dbReference type="PROSITE" id="PS00101">
    <property type="entry name" value="HEXAPEP_TRANSFERASES"/>
    <property type="match status" value="2"/>
</dbReference>
<accession>Q57T27</accession>
<feature type="chain" id="PRO_0000302599" description="Acyl-[acyl-carrier-protein]--UDP-N-acetylglucosamine O-acyltransferase">
    <location>
        <begin position="1"/>
        <end position="262"/>
    </location>
</feature>
<proteinExistence type="inferred from homology"/>